<organism>
    <name type="scientific">Schizosaccharomyces pombe (strain 972 / ATCC 24843)</name>
    <name type="common">Fission yeast</name>
    <dbReference type="NCBI Taxonomy" id="284812"/>
    <lineage>
        <taxon>Eukaryota</taxon>
        <taxon>Fungi</taxon>
        <taxon>Dikarya</taxon>
        <taxon>Ascomycota</taxon>
        <taxon>Taphrinomycotina</taxon>
        <taxon>Schizosaccharomycetes</taxon>
        <taxon>Schizosaccharomycetales</taxon>
        <taxon>Schizosaccharomycetaceae</taxon>
        <taxon>Schizosaccharomyces</taxon>
    </lineage>
</organism>
<gene>
    <name type="ORF">SPBC215.13</name>
</gene>
<accession>O94317</accession>
<feature type="signal peptide" evidence="1">
    <location>
        <begin position="1"/>
        <end position="22"/>
    </location>
</feature>
<feature type="chain" id="PRO_0000374070" description="Uncharacterized serine-rich protein C215.13">
    <location>
        <begin position="23"/>
        <end status="unknown"/>
    </location>
</feature>
<feature type="propeptide" id="PRO_0000373872" description="Removed in mature form" evidence="1">
    <location>
        <begin status="unknown"/>
        <end position="534"/>
    </location>
</feature>
<feature type="region of interest" description="Disordered" evidence="2">
    <location>
        <begin position="70"/>
        <end position="145"/>
    </location>
</feature>
<feature type="region of interest" description="Disordered" evidence="2">
    <location>
        <begin position="176"/>
        <end position="418"/>
    </location>
</feature>
<feature type="glycosylation site" description="N-linked (GlcNAc...) asparagine" evidence="1">
    <location>
        <position position="31"/>
    </location>
</feature>
<feature type="glycosylation site" description="N-linked (GlcNAc...) asparagine" evidence="1">
    <location>
        <position position="426"/>
    </location>
</feature>
<proteinExistence type="evidence at protein level"/>
<name>YH5D_SCHPO</name>
<dbReference type="EMBL" id="CU329671">
    <property type="protein sequence ID" value="CAA22127.1"/>
    <property type="molecule type" value="Genomic_DNA"/>
</dbReference>
<dbReference type="PIR" id="T39903">
    <property type="entry name" value="T39903"/>
</dbReference>
<dbReference type="BioGRID" id="277194">
    <property type="interactions" value="11"/>
</dbReference>
<dbReference type="STRING" id="284812.O94317"/>
<dbReference type="PaxDb" id="4896-SPBC215.13.1"/>
<dbReference type="EnsemblFungi" id="SPBC215.13.1">
    <property type="protein sequence ID" value="SPBC215.13.1:pep"/>
    <property type="gene ID" value="SPBC215.13"/>
</dbReference>
<dbReference type="KEGG" id="spo:2540669"/>
<dbReference type="PomBase" id="SPBC215.13"/>
<dbReference type="VEuPathDB" id="FungiDB:SPBC215.13"/>
<dbReference type="HOGENOM" id="CLU_510135_0_0_1"/>
<dbReference type="InParanoid" id="O94317"/>
<dbReference type="OMA" id="CPITATQ"/>
<dbReference type="PRO" id="PR:O94317"/>
<dbReference type="Proteomes" id="UP000002485">
    <property type="component" value="Chromosome II"/>
</dbReference>
<dbReference type="GO" id="GO:0005783">
    <property type="term" value="C:endoplasmic reticulum"/>
    <property type="evidence" value="ECO:0007669"/>
    <property type="project" value="UniProtKB-SubCell"/>
</dbReference>
<dbReference type="GO" id="GO:0009897">
    <property type="term" value="C:external side of plasma membrane"/>
    <property type="evidence" value="ECO:0000304"/>
    <property type="project" value="PomBase"/>
</dbReference>
<reference key="1">
    <citation type="journal article" date="2002" name="Nature">
        <title>The genome sequence of Schizosaccharomyces pombe.</title>
        <authorList>
            <person name="Wood V."/>
            <person name="Gwilliam R."/>
            <person name="Rajandream M.A."/>
            <person name="Lyne M.H."/>
            <person name="Lyne R."/>
            <person name="Stewart A."/>
            <person name="Sgouros J.G."/>
            <person name="Peat N."/>
            <person name="Hayles J."/>
            <person name="Baker S.G."/>
            <person name="Basham D."/>
            <person name="Bowman S."/>
            <person name="Brooks K."/>
            <person name="Brown D."/>
            <person name="Brown S."/>
            <person name="Chillingworth T."/>
            <person name="Churcher C.M."/>
            <person name="Collins M."/>
            <person name="Connor R."/>
            <person name="Cronin A."/>
            <person name="Davis P."/>
            <person name="Feltwell T."/>
            <person name="Fraser A."/>
            <person name="Gentles S."/>
            <person name="Goble A."/>
            <person name="Hamlin N."/>
            <person name="Harris D.E."/>
            <person name="Hidalgo J."/>
            <person name="Hodgson G."/>
            <person name="Holroyd S."/>
            <person name="Hornsby T."/>
            <person name="Howarth S."/>
            <person name="Huckle E.J."/>
            <person name="Hunt S."/>
            <person name="Jagels K."/>
            <person name="James K.D."/>
            <person name="Jones L."/>
            <person name="Jones M."/>
            <person name="Leather S."/>
            <person name="McDonald S."/>
            <person name="McLean J."/>
            <person name="Mooney P."/>
            <person name="Moule S."/>
            <person name="Mungall K.L."/>
            <person name="Murphy L.D."/>
            <person name="Niblett D."/>
            <person name="Odell C."/>
            <person name="Oliver K."/>
            <person name="O'Neil S."/>
            <person name="Pearson D."/>
            <person name="Quail M.A."/>
            <person name="Rabbinowitsch E."/>
            <person name="Rutherford K.M."/>
            <person name="Rutter S."/>
            <person name="Saunders D."/>
            <person name="Seeger K."/>
            <person name="Sharp S."/>
            <person name="Skelton J."/>
            <person name="Simmonds M.N."/>
            <person name="Squares R."/>
            <person name="Squares S."/>
            <person name="Stevens K."/>
            <person name="Taylor K."/>
            <person name="Taylor R.G."/>
            <person name="Tivey A."/>
            <person name="Walsh S.V."/>
            <person name="Warren T."/>
            <person name="Whitehead S."/>
            <person name="Woodward J.R."/>
            <person name="Volckaert G."/>
            <person name="Aert R."/>
            <person name="Robben J."/>
            <person name="Grymonprez B."/>
            <person name="Weltjens I."/>
            <person name="Vanstreels E."/>
            <person name="Rieger M."/>
            <person name="Schaefer M."/>
            <person name="Mueller-Auer S."/>
            <person name="Gabel C."/>
            <person name="Fuchs M."/>
            <person name="Duesterhoeft A."/>
            <person name="Fritzc C."/>
            <person name="Holzer E."/>
            <person name="Moestl D."/>
            <person name="Hilbert H."/>
            <person name="Borzym K."/>
            <person name="Langer I."/>
            <person name="Beck A."/>
            <person name="Lehrach H."/>
            <person name="Reinhardt R."/>
            <person name="Pohl T.M."/>
            <person name="Eger P."/>
            <person name="Zimmermann W."/>
            <person name="Wedler H."/>
            <person name="Wambutt R."/>
            <person name="Purnelle B."/>
            <person name="Goffeau A."/>
            <person name="Cadieu E."/>
            <person name="Dreano S."/>
            <person name="Gloux S."/>
            <person name="Lelaure V."/>
            <person name="Mottier S."/>
            <person name="Galibert F."/>
            <person name="Aves S.J."/>
            <person name="Xiang Z."/>
            <person name="Hunt C."/>
            <person name="Moore K."/>
            <person name="Hurst S.M."/>
            <person name="Lucas M."/>
            <person name="Rochet M."/>
            <person name="Gaillardin C."/>
            <person name="Tallada V.A."/>
            <person name="Garzon A."/>
            <person name="Thode G."/>
            <person name="Daga R.R."/>
            <person name="Cruzado L."/>
            <person name="Jimenez J."/>
            <person name="Sanchez M."/>
            <person name="del Rey F."/>
            <person name="Benito J."/>
            <person name="Dominguez A."/>
            <person name="Revuelta J.L."/>
            <person name="Moreno S."/>
            <person name="Armstrong J."/>
            <person name="Forsburg S.L."/>
            <person name="Cerutti L."/>
            <person name="Lowe T."/>
            <person name="McCombie W.R."/>
            <person name="Paulsen I."/>
            <person name="Potashkin J."/>
            <person name="Shpakovski G.V."/>
            <person name="Ussery D."/>
            <person name="Barrell B.G."/>
            <person name="Nurse P."/>
        </authorList>
    </citation>
    <scope>NUCLEOTIDE SEQUENCE [LARGE SCALE GENOMIC DNA]</scope>
    <source>
        <strain>972 / ATCC 24843</strain>
    </source>
</reference>
<reference key="2">
    <citation type="journal article" date="2003" name="Yeast">
        <title>Genome-wide identification of fungal GPI proteins.</title>
        <authorList>
            <person name="De Groot P.W."/>
            <person name="Hellingwerf K.J."/>
            <person name="Klis F.M."/>
        </authorList>
    </citation>
    <scope>PREDICTION OF GPI-ANCHOR</scope>
</reference>
<reference key="3">
    <citation type="journal article" date="2006" name="Nat. Biotechnol.">
        <title>ORFeome cloning and global analysis of protein localization in the fission yeast Schizosaccharomyces pombe.</title>
        <authorList>
            <person name="Matsuyama A."/>
            <person name="Arai R."/>
            <person name="Yashiroda Y."/>
            <person name="Shirai A."/>
            <person name="Kamata A."/>
            <person name="Sekido S."/>
            <person name="Kobayashi Y."/>
            <person name="Hashimoto A."/>
            <person name="Hamamoto M."/>
            <person name="Hiraoka Y."/>
            <person name="Horinouchi S."/>
            <person name="Yoshida M."/>
        </authorList>
    </citation>
    <scope>SUBCELLULAR LOCATION [LARGE SCALE ANALYSIS]</scope>
</reference>
<evidence type="ECO:0000255" key="1"/>
<evidence type="ECO:0000256" key="2">
    <source>
        <dbReference type="SAM" id="MobiDB-lite"/>
    </source>
</evidence>
<evidence type="ECO:0000269" key="3">
    <source>
    </source>
</evidence>
<evidence type="ECO:0000305" key="4"/>
<comment type="subcellular location">
    <subcellularLocation>
        <location evidence="3">Endoplasmic reticulum</location>
    </subcellularLocation>
    <subcellularLocation>
        <location evidence="4">Cell membrane</location>
        <topology evidence="4">Lipid-anchor</topology>
        <topology evidence="4">GPI-anchor</topology>
    </subcellularLocation>
</comment>
<sequence>MGLRLLFSLICVFCISNIFTQAFLVHQIYGNSSFTKISLNQLEGRDSQEELQRRQEIRYYGRAAETGGTPTYYGYATPTSSSEPSIFSESATPSETNSYSSPVSSYSDPATSQLPSSTSFFSPTSSEYTPSSTESSSLLDPSSVSSAILPSSTSVEVSISSSSLSSSDPLTSSTFSSLSSSTSSSQPSVSSTSSSTFSSAAPTSTSSSYLSSSSVVSSSSSPSSSSSSTLTSSSLSTSSIPSTSSSSSSTSSSLSSSSSSSTASSSSSSSSIISSSSSSSSSPTSTSSTISSSSSSSSSPTSTSSTISSSSSSSSSFSSTLSSSSMSSSSSFSSSPTSSSSTISSSSSSPSSSSFSSTTSSSKSSSSFSSTVSSSSSTSSSTLTSSSSSSSRPASSSSHSSSLSSHKSSSSSKSSSAPVSSAFYHNSTSSRSSSHSSSHSLSSLSSKPILTASSSSLLTSSSHTYERSTVYVVTVETVSSGSSTYASQSTQTSILLVIVGDSSSTDSSGASSTHSKTSIFFSLFVVLAAAIVII</sequence>
<keyword id="KW-1003">Cell membrane</keyword>
<keyword id="KW-0256">Endoplasmic reticulum</keyword>
<keyword id="KW-0325">Glycoprotein</keyword>
<keyword id="KW-0336">GPI-anchor</keyword>
<keyword id="KW-0449">Lipoprotein</keyword>
<keyword id="KW-0472">Membrane</keyword>
<keyword id="KW-1185">Reference proteome</keyword>
<keyword id="KW-0732">Signal</keyword>
<protein>
    <recommendedName>
        <fullName>Uncharacterized serine-rich protein C215.13</fullName>
    </recommendedName>
</protein>